<comment type="similarity">
    <text evidence="1">Belongs to the cycloisomerase 2 family.</text>
</comment>
<accession>Q6GFD5</accession>
<organism>
    <name type="scientific">Staphylococcus aureus (strain MRSA252)</name>
    <dbReference type="NCBI Taxonomy" id="282458"/>
    <lineage>
        <taxon>Bacteria</taxon>
        <taxon>Bacillati</taxon>
        <taxon>Bacillota</taxon>
        <taxon>Bacilli</taxon>
        <taxon>Bacillales</taxon>
        <taxon>Staphylococcaceae</taxon>
        <taxon>Staphylococcus</taxon>
    </lineage>
</organism>
<gene>
    <name type="ordered locus">SAR2014</name>
</gene>
<reference key="1">
    <citation type="journal article" date="2004" name="Proc. Natl. Acad. Sci. U.S.A.">
        <title>Complete genomes of two clinical Staphylococcus aureus strains: evidence for the rapid evolution of virulence and drug resistance.</title>
        <authorList>
            <person name="Holden M.T.G."/>
            <person name="Feil E.J."/>
            <person name="Lindsay J.A."/>
            <person name="Peacock S.J."/>
            <person name="Day N.P.J."/>
            <person name="Enright M.C."/>
            <person name="Foster T.J."/>
            <person name="Moore C.E."/>
            <person name="Hurst L."/>
            <person name="Atkin R."/>
            <person name="Barron A."/>
            <person name="Bason N."/>
            <person name="Bentley S.D."/>
            <person name="Chillingworth C."/>
            <person name="Chillingworth T."/>
            <person name="Churcher C."/>
            <person name="Clark L."/>
            <person name="Corton C."/>
            <person name="Cronin A."/>
            <person name="Doggett J."/>
            <person name="Dowd L."/>
            <person name="Feltwell T."/>
            <person name="Hance Z."/>
            <person name="Harris B."/>
            <person name="Hauser H."/>
            <person name="Holroyd S."/>
            <person name="Jagels K."/>
            <person name="James K.D."/>
            <person name="Lennard N."/>
            <person name="Line A."/>
            <person name="Mayes R."/>
            <person name="Moule S."/>
            <person name="Mungall K."/>
            <person name="Ormond D."/>
            <person name="Quail M.A."/>
            <person name="Rabbinowitsch E."/>
            <person name="Rutherford K.M."/>
            <person name="Sanders M."/>
            <person name="Sharp S."/>
            <person name="Simmonds M."/>
            <person name="Stevens K."/>
            <person name="Whitehead S."/>
            <person name="Barrell B.G."/>
            <person name="Spratt B.G."/>
            <person name="Parkhill J."/>
        </authorList>
    </citation>
    <scope>NUCLEOTIDE SEQUENCE [LARGE SCALE GENOMIC DNA]</scope>
    <source>
        <strain>MRSA252</strain>
    </source>
</reference>
<dbReference type="EMBL" id="BX571856">
    <property type="protein sequence ID" value="CAG40999.1"/>
    <property type="molecule type" value="Genomic_DNA"/>
</dbReference>
<dbReference type="RefSeq" id="WP_000181322.1">
    <property type="nucleotide sequence ID" value="NC_002952.2"/>
</dbReference>
<dbReference type="SMR" id="Q6GFD5"/>
<dbReference type="KEGG" id="sar:SAR2014"/>
<dbReference type="HOGENOM" id="CLU_038716_3_0_9"/>
<dbReference type="Proteomes" id="UP000000596">
    <property type="component" value="Chromosome"/>
</dbReference>
<dbReference type="GO" id="GO:0005829">
    <property type="term" value="C:cytosol"/>
    <property type="evidence" value="ECO:0007669"/>
    <property type="project" value="TreeGrafter"/>
</dbReference>
<dbReference type="GO" id="GO:0017057">
    <property type="term" value="F:6-phosphogluconolactonase activity"/>
    <property type="evidence" value="ECO:0007669"/>
    <property type="project" value="TreeGrafter"/>
</dbReference>
<dbReference type="FunFam" id="2.130.10.10:FF:000822">
    <property type="entry name" value="3-carboxy-cis,cis-muconate lactonizing enzyme"/>
    <property type="match status" value="1"/>
</dbReference>
<dbReference type="Gene3D" id="2.130.10.10">
    <property type="entry name" value="YVTN repeat-like/Quinoprotein amine dehydrogenase"/>
    <property type="match status" value="1"/>
</dbReference>
<dbReference type="InterPro" id="IPR050282">
    <property type="entry name" value="Cycloisomerase_2"/>
</dbReference>
<dbReference type="InterPro" id="IPR019405">
    <property type="entry name" value="Lactonase_7-beta_prop"/>
</dbReference>
<dbReference type="InterPro" id="IPR011045">
    <property type="entry name" value="N2O_reductase_N"/>
</dbReference>
<dbReference type="InterPro" id="IPR015943">
    <property type="entry name" value="WD40/YVTN_repeat-like_dom_sf"/>
</dbReference>
<dbReference type="PANTHER" id="PTHR30344:SF1">
    <property type="entry name" value="6-PHOSPHOGLUCONOLACTONASE"/>
    <property type="match status" value="1"/>
</dbReference>
<dbReference type="PANTHER" id="PTHR30344">
    <property type="entry name" value="6-PHOSPHOGLUCONOLACTONASE-RELATED"/>
    <property type="match status" value="1"/>
</dbReference>
<dbReference type="Pfam" id="PF10282">
    <property type="entry name" value="Lactonase"/>
    <property type="match status" value="1"/>
</dbReference>
<dbReference type="SUPFAM" id="SSF50974">
    <property type="entry name" value="Nitrous oxide reductase, N-terminal domain"/>
    <property type="match status" value="1"/>
</dbReference>
<evidence type="ECO:0000305" key="1"/>
<protein>
    <recommendedName>
        <fullName>Uncharacterized protein SAR2014</fullName>
    </recommendedName>
</protein>
<name>Y2014_STAAR</name>
<feature type="chain" id="PRO_0000298650" description="Uncharacterized protein SAR2014">
    <location>
        <begin position="1"/>
        <end position="342"/>
    </location>
</feature>
<sequence length="342" mass="38547">MTNGYIGSYTKKNGKGIYRFELNENQSRIDLLETGFELEASTYLVRNNEVLYGINKEGEQCGVASLKIDDNGELHLLNKCLSSKAGTGCYVSISEDKRYLFEAVYGAGIIRMYELNTHTGEIIRLIQELAHDFPTGTHERQDHPHAHYINQTPDGKYVAVTDLGADRIVTYKFDDNGFEFYKESLFKDSDGTRHIEFHDNGKFAYVVHELSNTVSVAEYNDGKFEELERHLTIPENFDGDTKLAAVRLSHDQQFLYVSNRGHDSIAIFKVLDNGQHLELVTITESGGQFPRDFNIASSDDLLVCAHEQGDSVVTVFERNKETGKITLCDNTRVASEGVCVIF</sequence>
<proteinExistence type="inferred from homology"/>